<evidence type="ECO:0000250" key="1">
    <source>
        <dbReference type="UniProtKB" id="P21282"/>
    </source>
</evidence>
<evidence type="ECO:0000250" key="2">
    <source>
        <dbReference type="UniProtKB" id="P21283"/>
    </source>
</evidence>
<evidence type="ECO:0000250" key="3">
    <source>
        <dbReference type="UniProtKB" id="P31412"/>
    </source>
</evidence>
<evidence type="ECO:0000250" key="4">
    <source>
        <dbReference type="UniProtKB" id="Q5FVI6"/>
    </source>
</evidence>
<evidence type="ECO:0000305" key="5"/>
<feature type="initiator methionine" description="Removed" evidence="2">
    <location>
        <position position="1"/>
    </location>
</feature>
<feature type="chain" id="PRO_0000307372" description="V-type proton ATPase subunit C 1">
    <location>
        <begin position="2"/>
        <end position="382"/>
    </location>
</feature>
<feature type="modified residue" description="N-acetylthreonine" evidence="2">
    <location>
        <position position="2"/>
    </location>
</feature>
<accession>Q4R5H9</accession>
<sequence>MTEFWLISAPGEKTCQQTWEKLHAATSKNNNLAVTSKFNIPDLKVGTLDVLVGLSDELAKLDAFVEGVVKKVAQYMADVLEDSKDKVQENLLANGVDLVTYITRFQWDMAKYPIKQSLKNISEIIAKGVTQIDNDLKSRASAYNNLKGNLQNLERKNAGSLLTRSLAEIVKKDDFVLDSEYLVTLLVVVPKLNHNDWIKQYETLAEMVVPRSSNVLSEDQDSYLCNVTLFRKAVDDFRHKARENKFIVRDFQYNEEEMKADKEEMNRLSTDKKKQFGPLVRWLKVNFSEAFIAWIHVKALRVFVESVLRYGLPVNFQAMLLQPNKKTLKKLREVLHELYKHLDSSAAAIIDAPMDIPGLNLSQQEYYPYVYYKIDCNLLEFK</sequence>
<protein>
    <recommendedName>
        <fullName>V-type proton ATPase subunit C 1</fullName>
        <shortName>V-ATPase subunit C 1</shortName>
    </recommendedName>
    <alternativeName>
        <fullName>Vacuolar proton pump subunit C 1</fullName>
    </alternativeName>
</protein>
<gene>
    <name type="primary">ATP6V1C1</name>
    <name type="ORF">QflA-13886</name>
</gene>
<proteinExistence type="evidence at transcript level"/>
<comment type="function">
    <text evidence="1 2 3">Subunit of the V1 complex of vacuolar(H+)-ATPase (V-ATPase), a multisubunit enzyme composed of a peripheral complex (V1) that hydrolyzes ATP and a membrane integral complex (V0) that translocates protons (By similarity). V-ATPase is responsible for acidifying and maintaining the pH of intracellular compartments and in some cell types, is targeted to the plasma membrane, where it is responsible for acidifying the extracellular environment (By similarity). Subunit C is necessary for the assembly of the catalytic sector of the enzyme and is likely to have a specific function in its catalytic activity (By similarity).</text>
</comment>
<comment type="subunit">
    <text evidence="2">V-ATPase is a heteromultimeric enzyme made up of two complexes: the ATP-hydrolytic V1 complex and the proton translocation V0 complex (By similarity). The V1 complex consists of three catalytic AB heterodimers that form a heterohexamer, three peripheral stalks each consisting of EG heterodimers, one central rotor including subunits D and F, and the regulatory subunits C and H (By similarity). The proton translocation complex V0 consists of the proton transport subunit a, a ring of proteolipid subunits c9c'', rotary subunit d, subunits e and f, and the accessory subunits ATP6AP1/Ac45 and ATP6AP2/PRR (By similarity).</text>
</comment>
<comment type="subcellular location">
    <subcellularLocation>
        <location evidence="4">Cytoplasmic vesicle</location>
        <location evidence="4">Secretory vesicle</location>
        <location evidence="4">Synaptic vesicle membrane</location>
        <topology evidence="5">Peripheral membrane protein</topology>
    </subcellularLocation>
    <subcellularLocation>
        <location evidence="4">Cytoplasmic vesicle</location>
        <location evidence="4">Clathrin-coated vesicle membrane</location>
        <topology evidence="5">Peripheral membrane protein</topology>
    </subcellularLocation>
</comment>
<comment type="similarity">
    <text evidence="5">Belongs to the V-ATPase C subunit family.</text>
</comment>
<keyword id="KW-0007">Acetylation</keyword>
<keyword id="KW-0968">Cytoplasmic vesicle</keyword>
<keyword id="KW-0375">Hydrogen ion transport</keyword>
<keyword id="KW-0406">Ion transport</keyword>
<keyword id="KW-0472">Membrane</keyword>
<keyword id="KW-1185">Reference proteome</keyword>
<keyword id="KW-0770">Synapse</keyword>
<keyword id="KW-0813">Transport</keyword>
<dbReference type="EMBL" id="AB169564">
    <property type="protein sequence ID" value="BAE01646.1"/>
    <property type="molecule type" value="mRNA"/>
</dbReference>
<dbReference type="RefSeq" id="NP_001271984.1">
    <property type="nucleotide sequence ID" value="NM_001285055.1"/>
</dbReference>
<dbReference type="RefSeq" id="XP_005563904.1">
    <property type="nucleotide sequence ID" value="XM_005563847.4"/>
</dbReference>
<dbReference type="RefSeq" id="XP_015310252.1">
    <property type="nucleotide sequence ID" value="XM_015454766.1"/>
</dbReference>
<dbReference type="RefSeq" id="XP_045254512.1">
    <property type="nucleotide sequence ID" value="XM_045398577.2"/>
</dbReference>
<dbReference type="SMR" id="Q4R5H9"/>
<dbReference type="STRING" id="9541.ENSMFAP00000027391"/>
<dbReference type="Ensembl" id="ENSMFAT00000001575.2">
    <property type="protein sequence ID" value="ENSMFAP00000027391.1"/>
    <property type="gene ID" value="ENSMFAG00000045088.2"/>
</dbReference>
<dbReference type="GeneID" id="101866706"/>
<dbReference type="CTD" id="528"/>
<dbReference type="VEuPathDB" id="HostDB:ENSMFAG00000045088"/>
<dbReference type="eggNOG" id="KOG2909">
    <property type="taxonomic scope" value="Eukaryota"/>
</dbReference>
<dbReference type="GeneTree" id="ENSGT00390000004263"/>
<dbReference type="OMA" id="VMIWIHV"/>
<dbReference type="Proteomes" id="UP000233100">
    <property type="component" value="Chromosome 8"/>
</dbReference>
<dbReference type="Bgee" id="ENSMFAG00000045088">
    <property type="expression patterns" value="Expressed in temporal lobe and 13 other cell types or tissues"/>
</dbReference>
<dbReference type="GO" id="GO:0030665">
    <property type="term" value="C:clathrin-coated vesicle membrane"/>
    <property type="evidence" value="ECO:0007669"/>
    <property type="project" value="UniProtKB-SubCell"/>
</dbReference>
<dbReference type="GO" id="GO:0005765">
    <property type="term" value="C:lysosomal membrane"/>
    <property type="evidence" value="ECO:0007669"/>
    <property type="project" value="TreeGrafter"/>
</dbReference>
<dbReference type="GO" id="GO:0005886">
    <property type="term" value="C:plasma membrane"/>
    <property type="evidence" value="ECO:0000250"/>
    <property type="project" value="UniProtKB"/>
</dbReference>
<dbReference type="GO" id="GO:0030672">
    <property type="term" value="C:synaptic vesicle membrane"/>
    <property type="evidence" value="ECO:0007669"/>
    <property type="project" value="UniProtKB-SubCell"/>
</dbReference>
<dbReference type="GO" id="GO:0000221">
    <property type="term" value="C:vacuolar proton-transporting V-type ATPase, V1 domain"/>
    <property type="evidence" value="ECO:0000250"/>
    <property type="project" value="UniProtKB"/>
</dbReference>
<dbReference type="GO" id="GO:0046961">
    <property type="term" value="F:proton-transporting ATPase activity, rotational mechanism"/>
    <property type="evidence" value="ECO:0007669"/>
    <property type="project" value="Ensembl"/>
</dbReference>
<dbReference type="GO" id="GO:0097401">
    <property type="term" value="P:synaptic vesicle lumen acidification"/>
    <property type="evidence" value="ECO:0007669"/>
    <property type="project" value="Ensembl"/>
</dbReference>
<dbReference type="CDD" id="cd14785">
    <property type="entry name" value="V-ATPase_C"/>
    <property type="match status" value="1"/>
</dbReference>
<dbReference type="FunFam" id="1.20.1460.10:FF:000004">
    <property type="entry name" value="V-type proton ATPase subunit C"/>
    <property type="match status" value="1"/>
</dbReference>
<dbReference type="FunFam" id="3.30.70.100:FF:000002">
    <property type="entry name" value="V-type proton ATPase subunit C"/>
    <property type="match status" value="1"/>
</dbReference>
<dbReference type="FunFam" id="3.30.70.1180:FF:000003">
    <property type="entry name" value="V-type proton ATPase subunit C"/>
    <property type="match status" value="1"/>
</dbReference>
<dbReference type="Gene3D" id="3.30.70.100">
    <property type="match status" value="1"/>
</dbReference>
<dbReference type="Gene3D" id="1.20.1460.10">
    <property type="entry name" value="subunit c (vma5p) of the yeast v-atpase, domain 2"/>
    <property type="match status" value="1"/>
</dbReference>
<dbReference type="Gene3D" id="3.30.70.1180">
    <property type="entry name" value="Vacuolar atp synthase subunit c, domain 1"/>
    <property type="match status" value="1"/>
</dbReference>
<dbReference type="InterPro" id="IPR004907">
    <property type="entry name" value="ATPase_V1-cplx_csu"/>
</dbReference>
<dbReference type="InterPro" id="IPR036132">
    <property type="entry name" value="Vac_ATP_synth_c_sf"/>
</dbReference>
<dbReference type="PANTHER" id="PTHR10137">
    <property type="entry name" value="V-TYPE PROTON ATPASE SUBUNIT C"/>
    <property type="match status" value="1"/>
</dbReference>
<dbReference type="PANTHER" id="PTHR10137:SF5">
    <property type="entry name" value="V-TYPE PROTON ATPASE SUBUNIT C 1"/>
    <property type="match status" value="1"/>
</dbReference>
<dbReference type="Pfam" id="PF03223">
    <property type="entry name" value="V-ATPase_C"/>
    <property type="match status" value="1"/>
</dbReference>
<dbReference type="SUPFAM" id="SSF118203">
    <property type="entry name" value="Vacuolar ATP synthase subunit C"/>
    <property type="match status" value="1"/>
</dbReference>
<reference key="1">
    <citation type="submission" date="2005-06" db="EMBL/GenBank/DDBJ databases">
        <title>DNA sequences of macaque genes expressed in brain or testis and its evolutionary implications.</title>
        <authorList>
            <consortium name="International consortium for macaque cDNA sequencing and analysis"/>
        </authorList>
    </citation>
    <scope>NUCLEOTIDE SEQUENCE [LARGE SCALE MRNA]</scope>
    <source>
        <tissue>Frontal cortex</tissue>
    </source>
</reference>
<organism>
    <name type="scientific">Macaca fascicularis</name>
    <name type="common">Crab-eating macaque</name>
    <name type="synonym">Cynomolgus monkey</name>
    <dbReference type="NCBI Taxonomy" id="9541"/>
    <lineage>
        <taxon>Eukaryota</taxon>
        <taxon>Metazoa</taxon>
        <taxon>Chordata</taxon>
        <taxon>Craniata</taxon>
        <taxon>Vertebrata</taxon>
        <taxon>Euteleostomi</taxon>
        <taxon>Mammalia</taxon>
        <taxon>Eutheria</taxon>
        <taxon>Euarchontoglires</taxon>
        <taxon>Primates</taxon>
        <taxon>Haplorrhini</taxon>
        <taxon>Catarrhini</taxon>
        <taxon>Cercopithecidae</taxon>
        <taxon>Cercopithecinae</taxon>
        <taxon>Macaca</taxon>
    </lineage>
</organism>
<name>VATC1_MACFA</name>